<sequence>MHYKKSIIGIAVTATAIIAGCQVTHQIVKSQGTAQGKHGEVQVETTFKDGHIVAIDVLKQKENKVLAGAVFKDVKQAIIDNNSIEVDGIAGATVTSKALKEAVGKSIEAAGVTLVATASAKKSEALTPAEYTYDVVIIGSGGAGFSAGLEAIAAGRSAVIIEKMPIIGGNSLISGAEMNVAGSWVQKNMGITDSKELFISDTLKGGDFKGDPEMVKTMVDNAVGAAEWLRDYVKVEFYPDQLFQFGGHSVKRALIPKGHTGAEVISKFSIKADEVGLPIHTNTKAEKLIQDQTGRIVGVEAAHNGKTITYHAKRGVVIATGGFSSNMEMRKKYNPELDERYGSTGHAGGTGDGIVMAEKIHAAAKNMGYIQSYPICSPTSGAIALIADSRFFGAVLINQKGERFVEELERRDVISHAILAQPGRYTYVLWNQDIENVAHTVEMHQGELKEFTKDGLMYKVDTLEEAAKVFNIPEDKLLSTIKDVNHYAATGKDEAFNHRSGLVDLSKGPYWILKATPSVHHTMGGLVVDTRTRVLDEQGKVIPGLFAAGEVTGLTHGTNRLGGNAYTDIIVYGRIAGQEAAK</sequence>
<gene>
    <name type="primary">urdA</name>
    <name type="ordered locus">SO_4620</name>
</gene>
<organism>
    <name type="scientific">Shewanella oneidensis (strain ATCC 700550 / JCM 31522 / CIP 106686 / LMG 19005 / NCIMB 14063 / MR-1)</name>
    <dbReference type="NCBI Taxonomy" id="211586"/>
    <lineage>
        <taxon>Bacteria</taxon>
        <taxon>Pseudomonadati</taxon>
        <taxon>Pseudomonadota</taxon>
        <taxon>Gammaproteobacteria</taxon>
        <taxon>Alteromonadales</taxon>
        <taxon>Shewanellaceae</taxon>
        <taxon>Shewanella</taxon>
    </lineage>
</organism>
<evidence type="ECO:0000250" key="1">
    <source>
        <dbReference type="UniProtKB" id="A0A1R4LHH9"/>
    </source>
</evidence>
<evidence type="ECO:0000250" key="2">
    <source>
        <dbReference type="UniProtKB" id="P0C278"/>
    </source>
</evidence>
<evidence type="ECO:0000250" key="3">
    <source>
        <dbReference type="UniProtKB" id="P83223"/>
    </source>
</evidence>
<evidence type="ECO:0000255" key="4">
    <source>
        <dbReference type="PROSITE-ProRule" id="PRU00303"/>
    </source>
</evidence>
<evidence type="ECO:0000269" key="5">
    <source>
    </source>
</evidence>
<evidence type="ECO:0000305" key="6"/>
<evidence type="ECO:0000305" key="7">
    <source>
    </source>
</evidence>
<evidence type="ECO:0007829" key="8">
    <source>
        <dbReference type="PDB" id="6T85"/>
    </source>
</evidence>
<evidence type="ECO:0007829" key="9">
    <source>
        <dbReference type="PDB" id="6T88"/>
    </source>
</evidence>
<feature type="signal peptide" evidence="4">
    <location>
        <begin position="1"/>
        <end position="20"/>
    </location>
</feature>
<feature type="chain" id="PRO_0000421946" description="Urocanate reductase">
    <location>
        <begin position="21"/>
        <end position="582"/>
    </location>
</feature>
<feature type="active site" description="Proton donor" evidence="2">
    <location>
        <position position="411"/>
    </location>
</feature>
<feature type="binding site" evidence="3">
    <location>
        <position position="143"/>
    </location>
    <ligand>
        <name>FAD</name>
        <dbReference type="ChEBI" id="CHEBI:57692"/>
    </ligand>
</feature>
<feature type="binding site" evidence="3">
    <location>
        <position position="162"/>
    </location>
    <ligand>
        <name>FAD</name>
        <dbReference type="ChEBI" id="CHEBI:57692"/>
    </ligand>
</feature>
<feature type="binding site" evidence="3">
    <location>
        <position position="170"/>
    </location>
    <ligand>
        <name>FAD</name>
        <dbReference type="ChEBI" id="CHEBI:57692"/>
    </ligand>
</feature>
<feature type="binding site" evidence="3">
    <location>
        <position position="171"/>
    </location>
    <ligand>
        <name>FAD</name>
        <dbReference type="ChEBI" id="CHEBI:57692"/>
    </ligand>
</feature>
<feature type="binding site" evidence="3">
    <location>
        <position position="175"/>
    </location>
    <ligand>
        <name>FAD</name>
        <dbReference type="ChEBI" id="CHEBI:57692"/>
    </ligand>
</feature>
<feature type="binding site" evidence="3">
    <location>
        <position position="176"/>
    </location>
    <ligand>
        <name>FAD</name>
        <dbReference type="ChEBI" id="CHEBI:57692"/>
    </ligand>
</feature>
<feature type="binding site" evidence="3">
    <location>
        <position position="285"/>
    </location>
    <ligand>
        <name>FAD</name>
        <dbReference type="ChEBI" id="CHEBI:57692"/>
    </ligand>
</feature>
<feature type="binding site" evidence="3">
    <location>
        <position position="352"/>
    </location>
    <ligand>
        <name>FAD</name>
        <dbReference type="ChEBI" id="CHEBI:57692"/>
    </ligand>
</feature>
<feature type="binding site" evidence="3">
    <location>
        <position position="521"/>
    </location>
    <ligand>
        <name>FAD</name>
        <dbReference type="ChEBI" id="CHEBI:57692"/>
    </ligand>
</feature>
<feature type="binding site" evidence="3">
    <location>
        <position position="550"/>
    </location>
    <ligand>
        <name>FAD</name>
        <dbReference type="ChEBI" id="CHEBI:57692"/>
    </ligand>
</feature>
<feature type="binding site" evidence="3">
    <location>
        <position position="565"/>
    </location>
    <ligand>
        <name>FAD</name>
        <dbReference type="ChEBI" id="CHEBI:57692"/>
    </ligand>
</feature>
<feature type="modified residue" description="FMN phosphoryl threonine" evidence="1">
    <location>
        <position position="93"/>
    </location>
</feature>
<feature type="lipid moiety-binding region" description="N-palmitoyl cysteine" evidence="4">
    <location>
        <position position="21"/>
    </location>
</feature>
<feature type="lipid moiety-binding region" description="S-diacylglycerol cysteine" evidence="4">
    <location>
        <position position="21"/>
    </location>
</feature>
<feature type="strand" evidence="8">
    <location>
        <begin position="130"/>
        <end position="138"/>
    </location>
</feature>
<feature type="helix" evidence="8">
    <location>
        <begin position="142"/>
        <end position="153"/>
    </location>
</feature>
<feature type="strand" evidence="8">
    <location>
        <begin position="158"/>
        <end position="161"/>
    </location>
</feature>
<feature type="strand" evidence="8">
    <location>
        <begin position="163"/>
        <end position="167"/>
    </location>
</feature>
<feature type="helix" evidence="8">
    <location>
        <begin position="169"/>
        <end position="173"/>
    </location>
</feature>
<feature type="helix" evidence="8">
    <location>
        <begin position="184"/>
        <end position="189"/>
    </location>
</feature>
<feature type="helix" evidence="8">
    <location>
        <begin position="195"/>
        <end position="205"/>
    </location>
</feature>
<feature type="turn" evidence="8">
    <location>
        <begin position="206"/>
        <end position="208"/>
    </location>
</feature>
<feature type="helix" evidence="8">
    <location>
        <begin position="212"/>
        <end position="231"/>
    </location>
</feature>
<feature type="strand" evidence="9">
    <location>
        <begin position="237"/>
        <end position="243"/>
    </location>
</feature>
<feature type="strand" evidence="9">
    <location>
        <begin position="253"/>
        <end position="256"/>
    </location>
</feature>
<feature type="helix" evidence="8">
    <location>
        <begin position="257"/>
        <end position="259"/>
    </location>
</feature>
<feature type="helix" evidence="8">
    <location>
        <begin position="262"/>
        <end position="275"/>
    </location>
</feature>
<feature type="strand" evidence="8">
    <location>
        <begin position="284"/>
        <end position="290"/>
    </location>
</feature>
<feature type="strand" evidence="8">
    <location>
        <begin position="296"/>
        <end position="303"/>
    </location>
</feature>
<feature type="strand" evidence="8">
    <location>
        <begin position="306"/>
        <end position="318"/>
    </location>
</feature>
<feature type="helix" evidence="8">
    <location>
        <begin position="327"/>
        <end position="333"/>
    </location>
</feature>
<feature type="strand" evidence="9">
    <location>
        <begin position="343"/>
        <end position="345"/>
    </location>
</feature>
<feature type="helix" evidence="8">
    <location>
        <begin position="352"/>
        <end position="359"/>
    </location>
</feature>
<feature type="strand" evidence="8">
    <location>
        <begin position="370"/>
        <end position="376"/>
    </location>
</feature>
<feature type="turn" evidence="8">
    <location>
        <begin position="378"/>
        <end position="380"/>
    </location>
</feature>
<feature type="helix" evidence="8">
    <location>
        <begin position="385"/>
        <end position="392"/>
    </location>
</feature>
<feature type="strand" evidence="8">
    <location>
        <begin position="395"/>
        <end position="397"/>
    </location>
</feature>
<feature type="helix" evidence="8">
    <location>
        <begin position="411"/>
        <end position="419"/>
    </location>
</feature>
<feature type="helix" evidence="8">
    <location>
        <begin position="422"/>
        <end position="424"/>
    </location>
</feature>
<feature type="strand" evidence="8">
    <location>
        <begin position="426"/>
        <end position="431"/>
    </location>
</feature>
<feature type="helix" evidence="8">
    <location>
        <begin position="432"/>
        <end position="438"/>
    </location>
</feature>
<feature type="helix" evidence="8">
    <location>
        <begin position="440"/>
        <end position="443"/>
    </location>
</feature>
<feature type="helix" evidence="8">
    <location>
        <begin position="445"/>
        <end position="453"/>
    </location>
</feature>
<feature type="strand" evidence="8">
    <location>
        <begin position="456"/>
        <end position="462"/>
    </location>
</feature>
<feature type="helix" evidence="8">
    <location>
        <begin position="463"/>
        <end position="469"/>
    </location>
</feature>
<feature type="helix" evidence="8">
    <location>
        <begin position="474"/>
        <end position="490"/>
    </location>
</feature>
<feature type="turn" evidence="8">
    <location>
        <begin position="494"/>
        <end position="496"/>
    </location>
</feature>
<feature type="strand" evidence="8">
    <location>
        <begin position="510"/>
        <end position="522"/>
    </location>
</feature>
<feature type="strand" evidence="8">
    <location>
        <begin position="533"/>
        <end position="536"/>
    </location>
</feature>
<feature type="strand" evidence="8">
    <location>
        <begin position="541"/>
        <end position="547"/>
    </location>
</feature>
<feature type="strand" evidence="8">
    <location>
        <begin position="554"/>
        <end position="556"/>
    </location>
</feature>
<feature type="helix" evidence="8">
    <location>
        <begin position="564"/>
        <end position="582"/>
    </location>
</feature>
<protein>
    <recommendedName>
        <fullName>Urocanate reductase</fullName>
        <ecNumber>1.3.99.33</ecNumber>
    </recommendedName>
</protein>
<reference key="1">
    <citation type="journal article" date="2002" name="Nat. Biotechnol.">
        <title>Genome sequence of the dissimilatory metal ion-reducing bacterium Shewanella oneidensis.</title>
        <authorList>
            <person name="Heidelberg J.F."/>
            <person name="Paulsen I.T."/>
            <person name="Nelson K.E."/>
            <person name="Gaidos E.J."/>
            <person name="Nelson W.C."/>
            <person name="Read T.D."/>
            <person name="Eisen J.A."/>
            <person name="Seshadri R."/>
            <person name="Ward N.L."/>
            <person name="Methe B.A."/>
            <person name="Clayton R.A."/>
            <person name="Meyer T."/>
            <person name="Tsapin A."/>
            <person name="Scott J."/>
            <person name="Beanan M.J."/>
            <person name="Brinkac L.M."/>
            <person name="Daugherty S.C."/>
            <person name="DeBoy R.T."/>
            <person name="Dodson R.J."/>
            <person name="Durkin A.S."/>
            <person name="Haft D.H."/>
            <person name="Kolonay J.F."/>
            <person name="Madupu R."/>
            <person name="Peterson J.D."/>
            <person name="Umayam L.A."/>
            <person name="White O."/>
            <person name="Wolf A.M."/>
            <person name="Vamathevan J.J."/>
            <person name="Weidman J.F."/>
            <person name="Impraim M."/>
            <person name="Lee K."/>
            <person name="Berry K.J."/>
            <person name="Lee C."/>
            <person name="Mueller J."/>
            <person name="Khouri H.M."/>
            <person name="Gill J."/>
            <person name="Utterback T.R."/>
            <person name="McDonald L.A."/>
            <person name="Feldblyum T.V."/>
            <person name="Smith H.O."/>
            <person name="Venter J.C."/>
            <person name="Nealson K.H."/>
            <person name="Fraser C.M."/>
        </authorList>
    </citation>
    <scope>NUCLEOTIDE SEQUENCE [LARGE SCALE GENOMIC DNA]</scope>
    <source>
        <strain>ATCC 700550 / JCM 31522 / CIP 106686 / LMG 19005 / NCIMB 14063 / MR-1</strain>
    </source>
</reference>
<reference key="2">
    <citation type="journal article" date="2012" name="Mol. Microbiol.">
        <title>Urocanate reductase: identification of a novel anaerobic respiratory pathway in Shewanella oneidensis MR-1.</title>
        <authorList>
            <person name="Bogachev A.V."/>
            <person name="Bertsova Y.V."/>
            <person name="Bloch D.A."/>
            <person name="Verkhovsky M.I."/>
        </authorList>
    </citation>
    <scope>FUNCTION</scope>
    <scope>CATALYTIC ACTIVITY</scope>
    <scope>COFACTOR</scope>
    <scope>KINETIC PARAMETERS</scope>
    <scope>SUBSTRATE SPECIFICITY</scope>
    <scope>GENE NAME</scope>
    <scope>INDUCTION</scope>
    <scope>SUBCELLULAR LOCATION</scope>
    <scope>DISRUPTION PHENOTYPE</scope>
    <source>
        <strain>ATCC 700550 / JCM 31522 / CIP 106686 / LMG 19005 / NCIMB 14063 / MR-1</strain>
    </source>
</reference>
<proteinExistence type="evidence at protein level"/>
<accession>Q8CVD0</accession>
<dbReference type="EC" id="1.3.99.33"/>
<dbReference type="EMBL" id="AE014299">
    <property type="protein sequence ID" value="AAN57580.1"/>
    <property type="molecule type" value="Genomic_DNA"/>
</dbReference>
<dbReference type="RefSeq" id="NP_720136.1">
    <property type="nucleotide sequence ID" value="NC_004347.2"/>
</dbReference>
<dbReference type="RefSeq" id="WP_011074216.1">
    <property type="nucleotide sequence ID" value="NC_004347.2"/>
</dbReference>
<dbReference type="PDB" id="6T85">
    <property type="method" value="X-ray"/>
    <property type="resolution" value="1.10 A"/>
    <property type="chains" value="A=130-582"/>
</dbReference>
<dbReference type="PDB" id="6T86">
    <property type="method" value="X-ray"/>
    <property type="resolution" value="2.56 A"/>
    <property type="chains" value="A=130-582"/>
</dbReference>
<dbReference type="PDB" id="6T87">
    <property type="method" value="X-ray"/>
    <property type="resolution" value="1.56 A"/>
    <property type="chains" value="A=130-582"/>
</dbReference>
<dbReference type="PDB" id="6T88">
    <property type="method" value="X-ray"/>
    <property type="resolution" value="1.40 A"/>
    <property type="chains" value="A=130-582"/>
</dbReference>
<dbReference type="PDBsum" id="6T85"/>
<dbReference type="PDBsum" id="6T86"/>
<dbReference type="PDBsum" id="6T87"/>
<dbReference type="PDBsum" id="6T88"/>
<dbReference type="SMR" id="Q8CVD0"/>
<dbReference type="STRING" id="211586.SO_4620"/>
<dbReference type="PaxDb" id="211586-SO_4620"/>
<dbReference type="KEGG" id="son:SO_4620"/>
<dbReference type="PATRIC" id="fig|211586.12.peg.4477"/>
<dbReference type="eggNOG" id="COG1053">
    <property type="taxonomic scope" value="Bacteria"/>
</dbReference>
<dbReference type="eggNOG" id="COG3976">
    <property type="taxonomic scope" value="Bacteria"/>
</dbReference>
<dbReference type="HOGENOM" id="CLU_011398_4_0_6"/>
<dbReference type="OrthoDB" id="9148689at2"/>
<dbReference type="PhylomeDB" id="Q8CVD0"/>
<dbReference type="BioCyc" id="MetaCyc:MONOMER-17916"/>
<dbReference type="BioCyc" id="SONE211586:G1GMP-4269-MONOMER"/>
<dbReference type="BRENDA" id="1.3.99.33">
    <property type="organism ID" value="5706"/>
</dbReference>
<dbReference type="Proteomes" id="UP000008186">
    <property type="component" value="Chromosome"/>
</dbReference>
<dbReference type="GO" id="GO:0005737">
    <property type="term" value="C:cytoplasm"/>
    <property type="evidence" value="ECO:0000318"/>
    <property type="project" value="GO_Central"/>
</dbReference>
<dbReference type="GO" id="GO:0005886">
    <property type="term" value="C:plasma membrane"/>
    <property type="evidence" value="ECO:0007669"/>
    <property type="project" value="UniProtKB-SubCell"/>
</dbReference>
<dbReference type="GO" id="GO:0010181">
    <property type="term" value="F:FMN binding"/>
    <property type="evidence" value="ECO:0007669"/>
    <property type="project" value="InterPro"/>
</dbReference>
<dbReference type="GO" id="GO:0016491">
    <property type="term" value="F:oxidoreductase activity"/>
    <property type="evidence" value="ECO:0007669"/>
    <property type="project" value="UniProtKB-KW"/>
</dbReference>
<dbReference type="FunFam" id="3.90.700.10:FF:000007">
    <property type="entry name" value="NADH-dependent fumarate reductase"/>
    <property type="match status" value="1"/>
</dbReference>
<dbReference type="Gene3D" id="3.90.1010.20">
    <property type="match status" value="1"/>
</dbReference>
<dbReference type="Gene3D" id="3.50.50.60">
    <property type="entry name" value="FAD/NAD(P)-binding domain"/>
    <property type="match status" value="1"/>
</dbReference>
<dbReference type="Gene3D" id="3.90.700.10">
    <property type="entry name" value="Succinate dehydrogenase/fumarate reductase flavoprotein, catalytic domain"/>
    <property type="match status" value="1"/>
</dbReference>
<dbReference type="InterPro" id="IPR003953">
    <property type="entry name" value="FAD-dep_OxRdtase_2_FAD-bd"/>
</dbReference>
<dbReference type="InterPro" id="IPR050315">
    <property type="entry name" value="FAD-oxidoreductase_2"/>
</dbReference>
<dbReference type="InterPro" id="IPR036188">
    <property type="entry name" value="FAD/NAD-bd_sf"/>
</dbReference>
<dbReference type="InterPro" id="IPR010960">
    <property type="entry name" value="Flavocytochrome_c"/>
</dbReference>
<dbReference type="InterPro" id="IPR007329">
    <property type="entry name" value="FMN-bd"/>
</dbReference>
<dbReference type="InterPro" id="IPR027477">
    <property type="entry name" value="Succ_DH/fumarate_Rdtase_cat_sf"/>
</dbReference>
<dbReference type="NCBIfam" id="TIGR01813">
    <property type="entry name" value="flavo_cyto_c"/>
    <property type="match status" value="1"/>
</dbReference>
<dbReference type="PANTHER" id="PTHR43400:SF7">
    <property type="entry name" value="FAD-DEPENDENT OXIDOREDUCTASE 2 FAD BINDING DOMAIN-CONTAINING PROTEIN"/>
    <property type="match status" value="1"/>
</dbReference>
<dbReference type="PANTHER" id="PTHR43400">
    <property type="entry name" value="FUMARATE REDUCTASE"/>
    <property type="match status" value="1"/>
</dbReference>
<dbReference type="Pfam" id="PF00890">
    <property type="entry name" value="FAD_binding_2"/>
    <property type="match status" value="1"/>
</dbReference>
<dbReference type="Pfam" id="PF04205">
    <property type="entry name" value="FMN_bind"/>
    <property type="match status" value="1"/>
</dbReference>
<dbReference type="PRINTS" id="PR00368">
    <property type="entry name" value="FADPNR"/>
</dbReference>
<dbReference type="SMART" id="SM00900">
    <property type="entry name" value="FMN_bind"/>
    <property type="match status" value="1"/>
</dbReference>
<dbReference type="SUPFAM" id="SSF51905">
    <property type="entry name" value="FAD/NAD(P)-binding domain"/>
    <property type="match status" value="1"/>
</dbReference>
<dbReference type="SUPFAM" id="SSF56425">
    <property type="entry name" value="Succinate dehydrogenase/fumarate reductase flavoprotein, catalytic domain"/>
    <property type="match status" value="1"/>
</dbReference>
<dbReference type="PROSITE" id="PS51257">
    <property type="entry name" value="PROKAR_LIPOPROTEIN"/>
    <property type="match status" value="1"/>
</dbReference>
<keyword id="KW-0002">3D-structure</keyword>
<keyword id="KW-1003">Cell membrane</keyword>
<keyword id="KW-0274">FAD</keyword>
<keyword id="KW-0285">Flavoprotein</keyword>
<keyword id="KW-0288">FMN</keyword>
<keyword id="KW-0449">Lipoprotein</keyword>
<keyword id="KW-0472">Membrane</keyword>
<keyword id="KW-0560">Oxidoreductase</keyword>
<keyword id="KW-0564">Palmitate</keyword>
<keyword id="KW-0597">Phosphoprotein</keyword>
<keyword id="KW-1185">Reference proteome</keyword>
<keyword id="KW-0732">Signal</keyword>
<name>URDA_SHEON</name>
<comment type="function">
    <text evidence="5">Catalyzes the two-electron reduction of urocanate to dihydrourocanate (also named imidazole propionate or deamino-histidine). The physiological electron donor is unknown; it might be the membrane-bound tetraheme cytochrome c (CymA). Enables anaerobic growth with urocanate as a sole terminal electron acceptor, and thus can provide the cells with a niche where no other bacteria can compete and survive. Is unable to reduce cinnamate and other unsaturated organic acids such as acrylic, crotonic, fumaric and orotic acids. Has no fumarate reductase or succinate dehydrogenase activity.</text>
</comment>
<comment type="catalytic activity">
    <reaction evidence="5">
        <text>dihydrourocanate + A = urocanate + AH2</text>
        <dbReference type="Rhea" id="RHEA:36059"/>
        <dbReference type="ChEBI" id="CHEBI:13193"/>
        <dbReference type="ChEBI" id="CHEBI:17499"/>
        <dbReference type="ChEBI" id="CHEBI:27247"/>
        <dbReference type="ChEBI" id="CHEBI:72991"/>
        <dbReference type="EC" id="1.3.99.33"/>
    </reaction>
</comment>
<comment type="cofactor">
    <cofactor evidence="5">
        <name>FAD</name>
        <dbReference type="ChEBI" id="CHEBI:57692"/>
    </cofactor>
    <text evidence="5">Binds 1 FAD per subunit.</text>
</comment>
<comment type="cofactor">
    <cofactor evidence="5">
        <name>FMN</name>
        <dbReference type="ChEBI" id="CHEBI:58210"/>
    </cofactor>
    <text evidence="5">Binds 1 FMN covalently per subunit.</text>
</comment>
<comment type="biophysicochemical properties">
    <kinetics>
        <text evidence="5">KM for urocanate is inferior to 10 uM and kcat is 360 sec(-1) (at pH 7.0).</text>
    </kinetics>
</comment>
<comment type="subcellular location">
    <subcellularLocation>
        <location evidence="7">Cell membrane</location>
        <topology evidence="7">Lipid-anchor</topology>
        <orientation evidence="7">Periplasmic side</orientation>
    </subcellularLocation>
    <text>Is associated, but not too tight, with the membrane.</text>
</comment>
<comment type="induction">
    <text evidence="5">By urocanate under anaerobic conditions.</text>
</comment>
<comment type="disruption phenotype">
    <text evidence="5">In the urdA-deficient strain, the urocanate reductase activity measured in the crude extract from cells anaerobically grown on a mixture of urocanate and fumarate (or urocanate and nitrate) is about 20-fold lower than in the wild-type. This strain is not affected in its ability to grow in the presence of fumarate, but fails to grow anaerobically on urocanate.</text>
</comment>
<comment type="similarity">
    <text evidence="6">Belongs to the FAD-dependent oxidoreductase 2 family. FRD/SDH subfamily.</text>
</comment>